<name>DKGB_SALTI</name>
<evidence type="ECO:0000250" key="1"/>
<evidence type="ECO:0000250" key="2">
    <source>
        <dbReference type="UniProtKB" id="P30863"/>
    </source>
</evidence>
<evidence type="ECO:0000305" key="3"/>
<organism>
    <name type="scientific">Salmonella typhi</name>
    <dbReference type="NCBI Taxonomy" id="90370"/>
    <lineage>
        <taxon>Bacteria</taxon>
        <taxon>Pseudomonadati</taxon>
        <taxon>Pseudomonadota</taxon>
        <taxon>Gammaproteobacteria</taxon>
        <taxon>Enterobacterales</taxon>
        <taxon>Enterobacteriaceae</taxon>
        <taxon>Salmonella</taxon>
    </lineage>
</organism>
<accession>Q8Z988</accession>
<keyword id="KW-0963">Cytoplasm</keyword>
<keyword id="KW-0521">NADP</keyword>
<keyword id="KW-0560">Oxidoreductase</keyword>
<protein>
    <recommendedName>
        <fullName evidence="2">Methylglyoxal reductase DkgB</fullName>
        <ecNumber evidence="2">1.1.1.-</ecNumber>
    </recommendedName>
</protein>
<dbReference type="EC" id="1.1.1.-" evidence="2"/>
<dbReference type="EMBL" id="AL513382">
    <property type="protein sequence ID" value="CAD08709.1"/>
    <property type="molecule type" value="Genomic_DNA"/>
</dbReference>
<dbReference type="EMBL" id="AE014613">
    <property type="protein sequence ID" value="AAO70186.1"/>
    <property type="molecule type" value="Genomic_DNA"/>
</dbReference>
<dbReference type="RefSeq" id="NP_454858.1">
    <property type="nucleotide sequence ID" value="NC_003198.1"/>
</dbReference>
<dbReference type="RefSeq" id="WP_000154870.1">
    <property type="nucleotide sequence ID" value="NZ_WSUR01000037.1"/>
</dbReference>
<dbReference type="SMR" id="Q8Z988"/>
<dbReference type="STRING" id="220341.gene:17584312"/>
<dbReference type="KEGG" id="stt:t2610"/>
<dbReference type="KEGG" id="sty:STY0276"/>
<dbReference type="PATRIC" id="fig|220341.7.peg.278"/>
<dbReference type="eggNOG" id="COG0656">
    <property type="taxonomic scope" value="Bacteria"/>
</dbReference>
<dbReference type="HOGENOM" id="CLU_023205_0_1_6"/>
<dbReference type="OMA" id="MVNQIFL"/>
<dbReference type="OrthoDB" id="9804790at2"/>
<dbReference type="Proteomes" id="UP000000541">
    <property type="component" value="Chromosome"/>
</dbReference>
<dbReference type="Proteomes" id="UP000002670">
    <property type="component" value="Chromosome"/>
</dbReference>
<dbReference type="GO" id="GO:0005737">
    <property type="term" value="C:cytoplasm"/>
    <property type="evidence" value="ECO:0007669"/>
    <property type="project" value="UniProtKB-SubCell"/>
</dbReference>
<dbReference type="GO" id="GO:0004033">
    <property type="term" value="F:aldo-keto reductase (NADPH) activity"/>
    <property type="evidence" value="ECO:0007669"/>
    <property type="project" value="TreeGrafter"/>
</dbReference>
<dbReference type="GO" id="GO:1990002">
    <property type="term" value="F:methylglyoxal reductase (NADPH) (acetol producing) activity"/>
    <property type="evidence" value="ECO:0007669"/>
    <property type="project" value="TreeGrafter"/>
</dbReference>
<dbReference type="GO" id="GO:0019853">
    <property type="term" value="P:L-ascorbic acid biosynthetic process"/>
    <property type="evidence" value="ECO:0007669"/>
    <property type="project" value="UniProtKB-KW"/>
</dbReference>
<dbReference type="GO" id="GO:0051596">
    <property type="term" value="P:methylglyoxal catabolic process"/>
    <property type="evidence" value="ECO:0007669"/>
    <property type="project" value="TreeGrafter"/>
</dbReference>
<dbReference type="CDD" id="cd19139">
    <property type="entry name" value="AKR_AKR3F2"/>
    <property type="match status" value="1"/>
</dbReference>
<dbReference type="FunFam" id="3.20.20.100:FF:000016">
    <property type="entry name" value="2,5-diketo-D-gluconic acid reductase B"/>
    <property type="match status" value="1"/>
</dbReference>
<dbReference type="Gene3D" id="3.20.20.100">
    <property type="entry name" value="NADP-dependent oxidoreductase domain"/>
    <property type="match status" value="1"/>
</dbReference>
<dbReference type="InterPro" id="IPR020471">
    <property type="entry name" value="AKR"/>
</dbReference>
<dbReference type="InterPro" id="IPR018170">
    <property type="entry name" value="Aldo/ket_reductase_CS"/>
</dbReference>
<dbReference type="InterPro" id="IPR023210">
    <property type="entry name" value="NADP_OxRdtase_dom"/>
</dbReference>
<dbReference type="InterPro" id="IPR036812">
    <property type="entry name" value="NADP_OxRdtase_dom_sf"/>
</dbReference>
<dbReference type="NCBIfam" id="NF008377">
    <property type="entry name" value="PRK11172.1"/>
    <property type="match status" value="1"/>
</dbReference>
<dbReference type="PANTHER" id="PTHR43827">
    <property type="entry name" value="2,5-DIKETO-D-GLUCONIC ACID REDUCTASE"/>
    <property type="match status" value="1"/>
</dbReference>
<dbReference type="PANTHER" id="PTHR43827:SF3">
    <property type="entry name" value="NADP-DEPENDENT OXIDOREDUCTASE DOMAIN-CONTAINING PROTEIN"/>
    <property type="match status" value="1"/>
</dbReference>
<dbReference type="Pfam" id="PF00248">
    <property type="entry name" value="Aldo_ket_red"/>
    <property type="match status" value="1"/>
</dbReference>
<dbReference type="PIRSF" id="PIRSF000097">
    <property type="entry name" value="AKR"/>
    <property type="match status" value="1"/>
</dbReference>
<dbReference type="PRINTS" id="PR00069">
    <property type="entry name" value="ALDKETRDTASE"/>
</dbReference>
<dbReference type="SUPFAM" id="SSF51430">
    <property type="entry name" value="NAD(P)-linked oxidoreductase"/>
    <property type="match status" value="1"/>
</dbReference>
<dbReference type="PROSITE" id="PS00798">
    <property type="entry name" value="ALDOKETO_REDUCTASE_1"/>
    <property type="match status" value="1"/>
</dbReference>
<dbReference type="PROSITE" id="PS00062">
    <property type="entry name" value="ALDOKETO_REDUCTASE_2"/>
    <property type="match status" value="1"/>
</dbReference>
<proteinExistence type="inferred from homology"/>
<gene>
    <name evidence="2" type="primary">dkgB</name>
    <name type="ordered locus">STY0276</name>
    <name type="ordered locus">t2610</name>
</gene>
<feature type="chain" id="PRO_0000124606" description="Methylglyoxal reductase DkgB">
    <location>
        <begin position="1"/>
        <end position="267"/>
    </location>
</feature>
<feature type="active site" description="Proton donor" evidence="1">
    <location>
        <position position="39"/>
    </location>
</feature>
<feature type="binding site" evidence="1">
    <location>
        <position position="97"/>
    </location>
    <ligand>
        <name>substrate</name>
    </ligand>
</feature>
<feature type="binding site" evidence="1">
    <location>
        <begin position="179"/>
        <end position="231"/>
    </location>
    <ligand>
        <name>NADP(+)</name>
        <dbReference type="ChEBI" id="CHEBI:58349"/>
    </ligand>
</feature>
<comment type="function">
    <text evidence="2">Aldo-keto reductase that significantly contributes to cellular methylglyoxal detoxification by catalyzing the NADPH-dependent conversion of methylglyoxal to acetol.</text>
</comment>
<comment type="catalytic activity">
    <reaction evidence="2">
        <text>hydroxyacetone + NADP(+) = methylglyoxal + NADPH + H(+)</text>
        <dbReference type="Rhea" id="RHEA:27986"/>
        <dbReference type="ChEBI" id="CHEBI:15378"/>
        <dbReference type="ChEBI" id="CHEBI:17158"/>
        <dbReference type="ChEBI" id="CHEBI:27957"/>
        <dbReference type="ChEBI" id="CHEBI:57783"/>
        <dbReference type="ChEBI" id="CHEBI:58349"/>
    </reaction>
</comment>
<comment type="subunit">
    <text evidence="2">Monomer.</text>
</comment>
<comment type="subcellular location">
    <subcellularLocation>
        <location evidence="3">Cytoplasm</location>
    </subcellularLocation>
</comment>
<comment type="similarity">
    <text evidence="3">Belongs to the aldo/keto reductase family.</text>
</comment>
<reference key="1">
    <citation type="journal article" date="2001" name="Nature">
        <title>Complete genome sequence of a multiple drug resistant Salmonella enterica serovar Typhi CT18.</title>
        <authorList>
            <person name="Parkhill J."/>
            <person name="Dougan G."/>
            <person name="James K.D."/>
            <person name="Thomson N.R."/>
            <person name="Pickard D."/>
            <person name="Wain J."/>
            <person name="Churcher C.M."/>
            <person name="Mungall K.L."/>
            <person name="Bentley S.D."/>
            <person name="Holden M.T.G."/>
            <person name="Sebaihia M."/>
            <person name="Baker S."/>
            <person name="Basham D."/>
            <person name="Brooks K."/>
            <person name="Chillingworth T."/>
            <person name="Connerton P."/>
            <person name="Cronin A."/>
            <person name="Davis P."/>
            <person name="Davies R.M."/>
            <person name="Dowd L."/>
            <person name="White N."/>
            <person name="Farrar J."/>
            <person name="Feltwell T."/>
            <person name="Hamlin N."/>
            <person name="Haque A."/>
            <person name="Hien T.T."/>
            <person name="Holroyd S."/>
            <person name="Jagels K."/>
            <person name="Krogh A."/>
            <person name="Larsen T.S."/>
            <person name="Leather S."/>
            <person name="Moule S."/>
            <person name="O'Gaora P."/>
            <person name="Parry C."/>
            <person name="Quail M.A."/>
            <person name="Rutherford K.M."/>
            <person name="Simmonds M."/>
            <person name="Skelton J."/>
            <person name="Stevens K."/>
            <person name="Whitehead S."/>
            <person name="Barrell B.G."/>
        </authorList>
    </citation>
    <scope>NUCLEOTIDE SEQUENCE [LARGE SCALE GENOMIC DNA]</scope>
    <source>
        <strain>CT18</strain>
    </source>
</reference>
<reference key="2">
    <citation type="journal article" date="2003" name="J. Bacteriol.">
        <title>Comparative genomics of Salmonella enterica serovar Typhi strains Ty2 and CT18.</title>
        <authorList>
            <person name="Deng W."/>
            <person name="Liou S.-R."/>
            <person name="Plunkett G. III"/>
            <person name="Mayhew G.F."/>
            <person name="Rose D.J."/>
            <person name="Burland V."/>
            <person name="Kodoyianni V."/>
            <person name="Schwartz D.C."/>
            <person name="Blattner F.R."/>
        </authorList>
    </citation>
    <scope>NUCLEOTIDE SEQUENCE [LARGE SCALE GENOMIC DNA]</scope>
    <source>
        <strain>ATCC 700931 / Ty2</strain>
    </source>
</reference>
<sequence>MTIPAFGLGTFRLKDDVVIASVKTALELGYRAVDTAQIYDNEAAVGQAIAESGVPRNELYITTKIWIENLSKDKLIPSLKESLKKLRTDYVDLTLIHWPSPGDAVSVEEFMQALLEAKKQGLTREIGISNFTIPLMEKAIAAVGADHIATNQIELSPYLQNRKVVDWAKAHGIHITSYMTLAYGKALKDEVIARIAVKHNATPVQVILAWAMGEGYSVIPSSTRRENLASNLLAQDLHLDAEDKNAIAALDCNDRLVSPEGLAPAWD</sequence>